<dbReference type="EC" id="6.3.4.2" evidence="1"/>
<dbReference type="EMBL" id="CP000249">
    <property type="protein sequence ID" value="ABD12514.1"/>
    <property type="molecule type" value="Genomic_DNA"/>
</dbReference>
<dbReference type="RefSeq" id="WP_011437542.1">
    <property type="nucleotide sequence ID" value="NZ_JENI01000071.1"/>
</dbReference>
<dbReference type="SMR" id="Q2J878"/>
<dbReference type="STRING" id="106370.Francci3_3157"/>
<dbReference type="MEROPS" id="C26.964"/>
<dbReference type="KEGG" id="fra:Francci3_3157"/>
<dbReference type="eggNOG" id="COG0504">
    <property type="taxonomic scope" value="Bacteria"/>
</dbReference>
<dbReference type="HOGENOM" id="CLU_011675_5_0_11"/>
<dbReference type="OrthoDB" id="9801107at2"/>
<dbReference type="PhylomeDB" id="Q2J878"/>
<dbReference type="UniPathway" id="UPA00159">
    <property type="reaction ID" value="UER00277"/>
</dbReference>
<dbReference type="Proteomes" id="UP000001937">
    <property type="component" value="Chromosome"/>
</dbReference>
<dbReference type="GO" id="GO:0005829">
    <property type="term" value="C:cytosol"/>
    <property type="evidence" value="ECO:0007669"/>
    <property type="project" value="TreeGrafter"/>
</dbReference>
<dbReference type="GO" id="GO:0005524">
    <property type="term" value="F:ATP binding"/>
    <property type="evidence" value="ECO:0007669"/>
    <property type="project" value="UniProtKB-KW"/>
</dbReference>
<dbReference type="GO" id="GO:0003883">
    <property type="term" value="F:CTP synthase activity"/>
    <property type="evidence" value="ECO:0007669"/>
    <property type="project" value="UniProtKB-UniRule"/>
</dbReference>
<dbReference type="GO" id="GO:0004359">
    <property type="term" value="F:glutaminase activity"/>
    <property type="evidence" value="ECO:0007669"/>
    <property type="project" value="RHEA"/>
</dbReference>
<dbReference type="GO" id="GO:0042802">
    <property type="term" value="F:identical protein binding"/>
    <property type="evidence" value="ECO:0007669"/>
    <property type="project" value="TreeGrafter"/>
</dbReference>
<dbReference type="GO" id="GO:0046872">
    <property type="term" value="F:metal ion binding"/>
    <property type="evidence" value="ECO:0007669"/>
    <property type="project" value="UniProtKB-KW"/>
</dbReference>
<dbReference type="GO" id="GO:0044210">
    <property type="term" value="P:'de novo' CTP biosynthetic process"/>
    <property type="evidence" value="ECO:0007669"/>
    <property type="project" value="UniProtKB-UniRule"/>
</dbReference>
<dbReference type="GO" id="GO:0019856">
    <property type="term" value="P:pyrimidine nucleobase biosynthetic process"/>
    <property type="evidence" value="ECO:0007669"/>
    <property type="project" value="TreeGrafter"/>
</dbReference>
<dbReference type="CDD" id="cd03113">
    <property type="entry name" value="CTPS_N"/>
    <property type="match status" value="1"/>
</dbReference>
<dbReference type="CDD" id="cd01746">
    <property type="entry name" value="GATase1_CTP_Synthase"/>
    <property type="match status" value="1"/>
</dbReference>
<dbReference type="FunFam" id="3.40.50.300:FF:000009">
    <property type="entry name" value="CTP synthase"/>
    <property type="match status" value="1"/>
</dbReference>
<dbReference type="FunFam" id="3.40.50.880:FF:000002">
    <property type="entry name" value="CTP synthase"/>
    <property type="match status" value="1"/>
</dbReference>
<dbReference type="Gene3D" id="3.40.50.880">
    <property type="match status" value="1"/>
</dbReference>
<dbReference type="Gene3D" id="3.40.50.300">
    <property type="entry name" value="P-loop containing nucleotide triphosphate hydrolases"/>
    <property type="match status" value="1"/>
</dbReference>
<dbReference type="HAMAP" id="MF_01227">
    <property type="entry name" value="PyrG"/>
    <property type="match status" value="1"/>
</dbReference>
<dbReference type="InterPro" id="IPR029062">
    <property type="entry name" value="Class_I_gatase-like"/>
</dbReference>
<dbReference type="InterPro" id="IPR004468">
    <property type="entry name" value="CTP_synthase"/>
</dbReference>
<dbReference type="InterPro" id="IPR017456">
    <property type="entry name" value="CTP_synthase_N"/>
</dbReference>
<dbReference type="InterPro" id="IPR017926">
    <property type="entry name" value="GATASE"/>
</dbReference>
<dbReference type="InterPro" id="IPR033828">
    <property type="entry name" value="GATase1_CTP_Synthase"/>
</dbReference>
<dbReference type="InterPro" id="IPR027417">
    <property type="entry name" value="P-loop_NTPase"/>
</dbReference>
<dbReference type="NCBIfam" id="NF003792">
    <property type="entry name" value="PRK05380.1"/>
    <property type="match status" value="1"/>
</dbReference>
<dbReference type="NCBIfam" id="TIGR00337">
    <property type="entry name" value="PyrG"/>
    <property type="match status" value="1"/>
</dbReference>
<dbReference type="PANTHER" id="PTHR11550">
    <property type="entry name" value="CTP SYNTHASE"/>
    <property type="match status" value="1"/>
</dbReference>
<dbReference type="PANTHER" id="PTHR11550:SF0">
    <property type="entry name" value="CTP SYNTHASE-RELATED"/>
    <property type="match status" value="1"/>
</dbReference>
<dbReference type="Pfam" id="PF06418">
    <property type="entry name" value="CTP_synth_N"/>
    <property type="match status" value="1"/>
</dbReference>
<dbReference type="Pfam" id="PF00117">
    <property type="entry name" value="GATase"/>
    <property type="match status" value="1"/>
</dbReference>
<dbReference type="SUPFAM" id="SSF52317">
    <property type="entry name" value="Class I glutamine amidotransferase-like"/>
    <property type="match status" value="1"/>
</dbReference>
<dbReference type="SUPFAM" id="SSF52540">
    <property type="entry name" value="P-loop containing nucleoside triphosphate hydrolases"/>
    <property type="match status" value="1"/>
</dbReference>
<dbReference type="PROSITE" id="PS51273">
    <property type="entry name" value="GATASE_TYPE_1"/>
    <property type="match status" value="1"/>
</dbReference>
<comment type="function">
    <text evidence="1">Catalyzes the ATP-dependent amination of UTP to CTP with either L-glutamine or ammonia as the source of nitrogen. Regulates intracellular CTP levels through interactions with the four ribonucleotide triphosphates.</text>
</comment>
<comment type="catalytic activity">
    <reaction evidence="1">
        <text>UTP + L-glutamine + ATP + H2O = CTP + L-glutamate + ADP + phosphate + 2 H(+)</text>
        <dbReference type="Rhea" id="RHEA:26426"/>
        <dbReference type="ChEBI" id="CHEBI:15377"/>
        <dbReference type="ChEBI" id="CHEBI:15378"/>
        <dbReference type="ChEBI" id="CHEBI:29985"/>
        <dbReference type="ChEBI" id="CHEBI:30616"/>
        <dbReference type="ChEBI" id="CHEBI:37563"/>
        <dbReference type="ChEBI" id="CHEBI:43474"/>
        <dbReference type="ChEBI" id="CHEBI:46398"/>
        <dbReference type="ChEBI" id="CHEBI:58359"/>
        <dbReference type="ChEBI" id="CHEBI:456216"/>
        <dbReference type="EC" id="6.3.4.2"/>
    </reaction>
</comment>
<comment type="catalytic activity">
    <reaction evidence="1">
        <text>L-glutamine + H2O = L-glutamate + NH4(+)</text>
        <dbReference type="Rhea" id="RHEA:15889"/>
        <dbReference type="ChEBI" id="CHEBI:15377"/>
        <dbReference type="ChEBI" id="CHEBI:28938"/>
        <dbReference type="ChEBI" id="CHEBI:29985"/>
        <dbReference type="ChEBI" id="CHEBI:58359"/>
    </reaction>
</comment>
<comment type="catalytic activity">
    <reaction evidence="1">
        <text>UTP + NH4(+) + ATP = CTP + ADP + phosphate + 2 H(+)</text>
        <dbReference type="Rhea" id="RHEA:16597"/>
        <dbReference type="ChEBI" id="CHEBI:15378"/>
        <dbReference type="ChEBI" id="CHEBI:28938"/>
        <dbReference type="ChEBI" id="CHEBI:30616"/>
        <dbReference type="ChEBI" id="CHEBI:37563"/>
        <dbReference type="ChEBI" id="CHEBI:43474"/>
        <dbReference type="ChEBI" id="CHEBI:46398"/>
        <dbReference type="ChEBI" id="CHEBI:456216"/>
    </reaction>
</comment>
<comment type="activity regulation">
    <text evidence="1">Allosterically activated by GTP, when glutamine is the substrate; GTP has no effect on the reaction when ammonia is the substrate. The allosteric effector GTP functions by stabilizing the protein conformation that binds the tetrahedral intermediate(s) formed during glutamine hydrolysis. Inhibited by the product CTP, via allosteric rather than competitive inhibition.</text>
</comment>
<comment type="pathway">
    <text evidence="1">Pyrimidine metabolism; CTP biosynthesis via de novo pathway; CTP from UDP: step 2/2.</text>
</comment>
<comment type="subunit">
    <text evidence="1">Homotetramer.</text>
</comment>
<comment type="miscellaneous">
    <text evidence="1">CTPSs have evolved a hybrid strategy for distinguishing between UTP and CTP. The overlapping regions of the product feedback inhibitory and substrate sites recognize a common feature in both compounds, the triphosphate moiety. To differentiate isosteric substrate and product pyrimidine rings, an additional pocket far from the expected kinase/ligase catalytic site, specifically recognizes the cytosine and ribose portions of the product inhibitor.</text>
</comment>
<comment type="similarity">
    <text evidence="1">Belongs to the CTP synthase family.</text>
</comment>
<evidence type="ECO:0000255" key="1">
    <source>
        <dbReference type="HAMAP-Rule" id="MF_01227"/>
    </source>
</evidence>
<evidence type="ECO:0000256" key="2">
    <source>
        <dbReference type="SAM" id="MobiDB-lite"/>
    </source>
</evidence>
<name>PYRG_FRACC</name>
<organism>
    <name type="scientific">Frankia casuarinae (strain DSM 45818 / CECT 9043 / HFP020203 / CcI3)</name>
    <dbReference type="NCBI Taxonomy" id="106370"/>
    <lineage>
        <taxon>Bacteria</taxon>
        <taxon>Bacillati</taxon>
        <taxon>Actinomycetota</taxon>
        <taxon>Actinomycetes</taxon>
        <taxon>Frankiales</taxon>
        <taxon>Frankiaceae</taxon>
        <taxon>Frankia</taxon>
    </lineage>
</organism>
<protein>
    <recommendedName>
        <fullName evidence="1">CTP synthase</fullName>
        <ecNumber evidence="1">6.3.4.2</ecNumber>
    </recommendedName>
    <alternativeName>
        <fullName evidence="1">Cytidine 5'-triphosphate synthase</fullName>
    </alternativeName>
    <alternativeName>
        <fullName evidence="1">Cytidine triphosphate synthetase</fullName>
        <shortName evidence="1">CTP synthetase</shortName>
        <shortName evidence="1">CTPS</shortName>
    </alternativeName>
    <alternativeName>
        <fullName evidence="1">UTP--ammonia ligase</fullName>
    </alternativeName>
</protein>
<sequence>MGQAHITKHIFVTGGVASSLGKGLTASSLGRLLKARGLRVTMQKLDPYLNVDPGTMNPFQHGEVFVTDDGAETDLDIGHYERFLDVSLDGSANVTTGQVYSAVIARERRGGYLGQTVQVVPHITDEIKDRIRRLADDSVDVVITEVGGTVGDIESLPYLEAIRQVRHEVGRDNALTVHVSLVPYLAPSGELKTKPTQHSVAALRSIGLQPDAVVCRSDRPLPDSLKKKIAMMCDVDDEAVVGAPDASSIYDIPRVLHREGLDAYVVRRLGLSFRDVDWTEWDTLLRRVHHPANTATIAIVGKYVDLPDAYLSVTEALRAGAFATDTRVDLRWVTSDECSSPDATATLLDGIDGVIVPGGFGVRGIEGKLTALRHARENGIPTLGICLGLQCMVIEAARSLAGLEAANSTEFVPETPHPVISTMADQHEVVAGTRDMGGTMRLGLYSCVLAPGTLAQREYGAAEVAERHRHRYEVNNDYRHRLAAAGLVFSGTSPDGRLVEVVELPADVHPYYVGTQAHPEFRSRPTRAHPLFRGLVAAAVAHADRRRGMLPVDLPSEDAPTPENGVPENGAAQTRGVTAGRSGGSIRRGASASRPSVSSNGTAALVSP</sequence>
<feature type="chain" id="PRO_0000266123" description="CTP synthase">
    <location>
        <begin position="1"/>
        <end position="608"/>
    </location>
</feature>
<feature type="domain" description="Glutamine amidotransferase type-1" evidence="1">
    <location>
        <begin position="296"/>
        <end position="545"/>
    </location>
</feature>
<feature type="region of interest" description="Amidoligase domain" evidence="1">
    <location>
        <begin position="1"/>
        <end position="271"/>
    </location>
</feature>
<feature type="region of interest" description="Disordered" evidence="2">
    <location>
        <begin position="550"/>
        <end position="608"/>
    </location>
</feature>
<feature type="compositionally biased region" description="Low complexity" evidence="2">
    <location>
        <begin position="584"/>
        <end position="594"/>
    </location>
</feature>
<feature type="active site" description="Nucleophile; for glutamine hydrolysis" evidence="1">
    <location>
        <position position="386"/>
    </location>
</feature>
<feature type="active site" evidence="1">
    <location>
        <position position="518"/>
    </location>
</feature>
<feature type="active site" evidence="1">
    <location>
        <position position="520"/>
    </location>
</feature>
<feature type="binding site" evidence="1">
    <location>
        <position position="18"/>
    </location>
    <ligand>
        <name>CTP</name>
        <dbReference type="ChEBI" id="CHEBI:37563"/>
        <note>allosteric inhibitor</note>
    </ligand>
</feature>
<feature type="binding site" evidence="1">
    <location>
        <position position="18"/>
    </location>
    <ligand>
        <name>UTP</name>
        <dbReference type="ChEBI" id="CHEBI:46398"/>
    </ligand>
</feature>
<feature type="binding site" evidence="1">
    <location>
        <begin position="19"/>
        <end position="24"/>
    </location>
    <ligand>
        <name>ATP</name>
        <dbReference type="ChEBI" id="CHEBI:30616"/>
    </ligand>
</feature>
<feature type="binding site" evidence="1">
    <location>
        <position position="76"/>
    </location>
    <ligand>
        <name>ATP</name>
        <dbReference type="ChEBI" id="CHEBI:30616"/>
    </ligand>
</feature>
<feature type="binding site" evidence="1">
    <location>
        <position position="76"/>
    </location>
    <ligand>
        <name>Mg(2+)</name>
        <dbReference type="ChEBI" id="CHEBI:18420"/>
    </ligand>
</feature>
<feature type="binding site" evidence="1">
    <location>
        <position position="145"/>
    </location>
    <ligand>
        <name>Mg(2+)</name>
        <dbReference type="ChEBI" id="CHEBI:18420"/>
    </ligand>
</feature>
<feature type="binding site" evidence="1">
    <location>
        <begin position="152"/>
        <end position="154"/>
    </location>
    <ligand>
        <name>CTP</name>
        <dbReference type="ChEBI" id="CHEBI:37563"/>
        <note>allosteric inhibitor</note>
    </ligand>
</feature>
<feature type="binding site" evidence="1">
    <location>
        <begin position="192"/>
        <end position="197"/>
    </location>
    <ligand>
        <name>CTP</name>
        <dbReference type="ChEBI" id="CHEBI:37563"/>
        <note>allosteric inhibitor</note>
    </ligand>
</feature>
<feature type="binding site" evidence="1">
    <location>
        <begin position="192"/>
        <end position="197"/>
    </location>
    <ligand>
        <name>UTP</name>
        <dbReference type="ChEBI" id="CHEBI:46398"/>
    </ligand>
</feature>
<feature type="binding site" evidence="1">
    <location>
        <position position="228"/>
    </location>
    <ligand>
        <name>CTP</name>
        <dbReference type="ChEBI" id="CHEBI:37563"/>
        <note>allosteric inhibitor</note>
    </ligand>
</feature>
<feature type="binding site" evidence="1">
    <location>
        <position position="228"/>
    </location>
    <ligand>
        <name>UTP</name>
        <dbReference type="ChEBI" id="CHEBI:46398"/>
    </ligand>
</feature>
<feature type="binding site" evidence="1">
    <location>
        <position position="359"/>
    </location>
    <ligand>
        <name>L-glutamine</name>
        <dbReference type="ChEBI" id="CHEBI:58359"/>
    </ligand>
</feature>
<feature type="binding site" evidence="1">
    <location>
        <begin position="387"/>
        <end position="390"/>
    </location>
    <ligand>
        <name>L-glutamine</name>
        <dbReference type="ChEBI" id="CHEBI:58359"/>
    </ligand>
</feature>
<feature type="binding site" evidence="1">
    <location>
        <position position="410"/>
    </location>
    <ligand>
        <name>L-glutamine</name>
        <dbReference type="ChEBI" id="CHEBI:58359"/>
    </ligand>
</feature>
<feature type="binding site" evidence="1">
    <location>
        <position position="471"/>
    </location>
    <ligand>
        <name>L-glutamine</name>
        <dbReference type="ChEBI" id="CHEBI:58359"/>
    </ligand>
</feature>
<gene>
    <name evidence="1" type="primary">pyrG</name>
    <name type="ordered locus">Francci3_3157</name>
</gene>
<keyword id="KW-0067">ATP-binding</keyword>
<keyword id="KW-0315">Glutamine amidotransferase</keyword>
<keyword id="KW-0436">Ligase</keyword>
<keyword id="KW-0460">Magnesium</keyword>
<keyword id="KW-0479">Metal-binding</keyword>
<keyword id="KW-0547">Nucleotide-binding</keyword>
<keyword id="KW-0665">Pyrimidine biosynthesis</keyword>
<keyword id="KW-1185">Reference proteome</keyword>
<accession>Q2J878</accession>
<reference key="1">
    <citation type="journal article" date="2007" name="Genome Res.">
        <title>Genome characteristics of facultatively symbiotic Frankia sp. strains reflect host range and host plant biogeography.</title>
        <authorList>
            <person name="Normand P."/>
            <person name="Lapierre P."/>
            <person name="Tisa L.S."/>
            <person name="Gogarten J.P."/>
            <person name="Alloisio N."/>
            <person name="Bagnarol E."/>
            <person name="Bassi C.A."/>
            <person name="Berry A.M."/>
            <person name="Bickhart D.M."/>
            <person name="Choisne N."/>
            <person name="Couloux A."/>
            <person name="Cournoyer B."/>
            <person name="Cruveiller S."/>
            <person name="Daubin V."/>
            <person name="Demange N."/>
            <person name="Francino M.P."/>
            <person name="Goltsman E."/>
            <person name="Huang Y."/>
            <person name="Kopp O.R."/>
            <person name="Labarre L."/>
            <person name="Lapidus A."/>
            <person name="Lavire C."/>
            <person name="Marechal J."/>
            <person name="Martinez M."/>
            <person name="Mastronunzio J.E."/>
            <person name="Mullin B.C."/>
            <person name="Niemann J."/>
            <person name="Pujic P."/>
            <person name="Rawnsley T."/>
            <person name="Rouy Z."/>
            <person name="Schenowitz C."/>
            <person name="Sellstedt A."/>
            <person name="Tavares F."/>
            <person name="Tomkins J.P."/>
            <person name="Vallenet D."/>
            <person name="Valverde C."/>
            <person name="Wall L.G."/>
            <person name="Wang Y."/>
            <person name="Medigue C."/>
            <person name="Benson D.R."/>
        </authorList>
    </citation>
    <scope>NUCLEOTIDE SEQUENCE [LARGE SCALE GENOMIC DNA]</scope>
    <source>
        <strain>DSM 45818 / CECT 9043 / HFP020203 / CcI3</strain>
    </source>
</reference>
<proteinExistence type="inferred from homology"/>